<proteinExistence type="evidence at protein level"/>
<name>FER_DATST</name>
<comment type="function">
    <text>Ferredoxins are iron-sulfur proteins that transfer electrons in a wide variety of metabolic reactions.</text>
</comment>
<comment type="cofactor">
    <cofactor>
        <name>[2Fe-2S] cluster</name>
        <dbReference type="ChEBI" id="CHEBI:190135"/>
    </cofactor>
    <text>Binds 1 [2Fe-2S] cluster.</text>
</comment>
<comment type="subcellular location">
    <subcellularLocation>
        <location>Plastid</location>
        <location>Chloroplast</location>
    </subcellularLocation>
</comment>
<comment type="similarity">
    <text evidence="2">Belongs to the 2Fe2S plant-type ferredoxin family.</text>
</comment>
<reference key="1">
    <citation type="journal article" date="1993" name="Phytochemistry">
        <title>Protein chemotaxonomy of genus Datura: identical amino acid sequence of ferredoxin from two varieties of Datura stramonium.</title>
        <authorList>
            <person name="Mino Y."/>
            <person name="Usami H."/>
            <person name="Inoue S."/>
            <person name="Ikeda K."/>
            <person name="Ota N."/>
        </authorList>
    </citation>
    <scope>PROTEIN SEQUENCE</scope>
    <source>
        <strain>cv. Stramonium</strain>
        <strain>cv. Tatula</strain>
    </source>
</reference>
<organism>
    <name type="scientific">Datura stramonium</name>
    <name type="common">Jimsonweed</name>
    <name type="synonym">Common thornapple</name>
    <dbReference type="NCBI Taxonomy" id="4076"/>
    <lineage>
        <taxon>Eukaryota</taxon>
        <taxon>Viridiplantae</taxon>
        <taxon>Streptophyta</taxon>
        <taxon>Embryophyta</taxon>
        <taxon>Tracheophyta</taxon>
        <taxon>Spermatophyta</taxon>
        <taxon>Magnoliopsida</taxon>
        <taxon>eudicotyledons</taxon>
        <taxon>Gunneridae</taxon>
        <taxon>Pentapetalae</taxon>
        <taxon>asterids</taxon>
        <taxon>lamiids</taxon>
        <taxon>Solanales</taxon>
        <taxon>Solanaceae</taxon>
        <taxon>Solanoideae</taxon>
        <taxon>Datureae</taxon>
        <taxon>Datura</taxon>
    </lineage>
</organism>
<sequence>ATYKVKLVTPDGPVEFNCPDDVYILDQAEEEGHDLPYSCRAGSCSSCAGKVTAGTVDQSDGNYLDDDQMADGFVLTCVAYPQSDVTIETHKEEELTG</sequence>
<protein>
    <recommendedName>
        <fullName>Ferredoxin</fullName>
    </recommendedName>
</protein>
<evidence type="ECO:0000255" key="1">
    <source>
        <dbReference type="PROSITE-ProRule" id="PRU00465"/>
    </source>
</evidence>
<evidence type="ECO:0000305" key="2"/>
<keyword id="KW-0001">2Fe-2S</keyword>
<keyword id="KW-0150">Chloroplast</keyword>
<keyword id="KW-0903">Direct protein sequencing</keyword>
<keyword id="KW-0249">Electron transport</keyword>
<keyword id="KW-0408">Iron</keyword>
<keyword id="KW-0411">Iron-sulfur</keyword>
<keyword id="KW-0479">Metal-binding</keyword>
<keyword id="KW-0934">Plastid</keyword>
<keyword id="KW-0813">Transport</keyword>
<dbReference type="SMR" id="P68165"/>
<dbReference type="GO" id="GO:0009570">
    <property type="term" value="C:chloroplast stroma"/>
    <property type="evidence" value="ECO:0007669"/>
    <property type="project" value="TreeGrafter"/>
</dbReference>
<dbReference type="GO" id="GO:0051537">
    <property type="term" value="F:2 iron, 2 sulfur cluster binding"/>
    <property type="evidence" value="ECO:0007669"/>
    <property type="project" value="UniProtKB-KW"/>
</dbReference>
<dbReference type="GO" id="GO:0009055">
    <property type="term" value="F:electron transfer activity"/>
    <property type="evidence" value="ECO:0007669"/>
    <property type="project" value="InterPro"/>
</dbReference>
<dbReference type="GO" id="GO:0046872">
    <property type="term" value="F:metal ion binding"/>
    <property type="evidence" value="ECO:0007669"/>
    <property type="project" value="UniProtKB-KW"/>
</dbReference>
<dbReference type="GO" id="GO:0022900">
    <property type="term" value="P:electron transport chain"/>
    <property type="evidence" value="ECO:0007669"/>
    <property type="project" value="InterPro"/>
</dbReference>
<dbReference type="GO" id="GO:0006124">
    <property type="term" value="P:ferredoxin metabolic process"/>
    <property type="evidence" value="ECO:0007669"/>
    <property type="project" value="UniProtKB-ARBA"/>
</dbReference>
<dbReference type="CDD" id="cd00207">
    <property type="entry name" value="fer2"/>
    <property type="match status" value="1"/>
</dbReference>
<dbReference type="FunFam" id="3.10.20.30:FF:000014">
    <property type="entry name" value="Ferredoxin"/>
    <property type="match status" value="1"/>
</dbReference>
<dbReference type="Gene3D" id="3.10.20.30">
    <property type="match status" value="1"/>
</dbReference>
<dbReference type="InterPro" id="IPR036010">
    <property type="entry name" value="2Fe-2S_ferredoxin-like_sf"/>
</dbReference>
<dbReference type="InterPro" id="IPR001041">
    <property type="entry name" value="2Fe-2S_ferredoxin-type"/>
</dbReference>
<dbReference type="InterPro" id="IPR006058">
    <property type="entry name" value="2Fe2S_fd_BS"/>
</dbReference>
<dbReference type="InterPro" id="IPR012675">
    <property type="entry name" value="Beta-grasp_dom_sf"/>
</dbReference>
<dbReference type="InterPro" id="IPR010241">
    <property type="entry name" value="Fd_pln"/>
</dbReference>
<dbReference type="NCBIfam" id="TIGR02008">
    <property type="entry name" value="fdx_plant"/>
    <property type="match status" value="1"/>
</dbReference>
<dbReference type="PANTHER" id="PTHR43112">
    <property type="entry name" value="FERREDOXIN"/>
    <property type="match status" value="1"/>
</dbReference>
<dbReference type="PANTHER" id="PTHR43112:SF3">
    <property type="entry name" value="FERREDOXIN-2, CHLOROPLASTIC"/>
    <property type="match status" value="1"/>
</dbReference>
<dbReference type="Pfam" id="PF00111">
    <property type="entry name" value="Fer2"/>
    <property type="match status" value="1"/>
</dbReference>
<dbReference type="SUPFAM" id="SSF54292">
    <property type="entry name" value="2Fe-2S ferredoxin-like"/>
    <property type="match status" value="1"/>
</dbReference>
<dbReference type="PROSITE" id="PS00197">
    <property type="entry name" value="2FE2S_FER_1"/>
    <property type="match status" value="1"/>
</dbReference>
<dbReference type="PROSITE" id="PS51085">
    <property type="entry name" value="2FE2S_FER_2"/>
    <property type="match status" value="1"/>
</dbReference>
<accession>P68165</accession>
<accession>P81454</accession>
<feature type="chain" id="PRO_0000189325" description="Ferredoxin">
    <location>
        <begin position="1"/>
        <end position="97"/>
    </location>
</feature>
<feature type="domain" description="2Fe-2S ferredoxin-type" evidence="1">
    <location>
        <begin position="3"/>
        <end position="93"/>
    </location>
</feature>
<feature type="binding site" evidence="1">
    <location>
        <position position="39"/>
    </location>
    <ligand>
        <name>[2Fe-2S] cluster</name>
        <dbReference type="ChEBI" id="CHEBI:190135"/>
    </ligand>
</feature>
<feature type="binding site" evidence="1">
    <location>
        <position position="44"/>
    </location>
    <ligand>
        <name>[2Fe-2S] cluster</name>
        <dbReference type="ChEBI" id="CHEBI:190135"/>
    </ligand>
</feature>
<feature type="binding site" evidence="1">
    <location>
        <position position="47"/>
    </location>
    <ligand>
        <name>[2Fe-2S] cluster</name>
        <dbReference type="ChEBI" id="CHEBI:190135"/>
    </ligand>
</feature>
<feature type="binding site" evidence="1">
    <location>
        <position position="77"/>
    </location>
    <ligand>
        <name>[2Fe-2S] cluster</name>
        <dbReference type="ChEBI" id="CHEBI:190135"/>
    </ligand>
</feature>